<protein>
    <recommendedName>
        <fullName evidence="1">Glycogen synthase</fullName>
        <ecNumber evidence="1">2.4.1.21</ecNumber>
    </recommendedName>
    <alternativeName>
        <fullName evidence="1">Starch [bacterial glycogen] synthase</fullName>
    </alternativeName>
</protein>
<proteinExistence type="inferred from homology"/>
<evidence type="ECO:0000255" key="1">
    <source>
        <dbReference type="HAMAP-Rule" id="MF_00484"/>
    </source>
</evidence>
<organism>
    <name type="scientific">Haemophilus influenzae (strain 86-028NP)</name>
    <dbReference type="NCBI Taxonomy" id="281310"/>
    <lineage>
        <taxon>Bacteria</taxon>
        <taxon>Pseudomonadati</taxon>
        <taxon>Pseudomonadota</taxon>
        <taxon>Gammaproteobacteria</taxon>
        <taxon>Pasteurellales</taxon>
        <taxon>Pasteurellaceae</taxon>
        <taxon>Haemophilus</taxon>
    </lineage>
</organism>
<dbReference type="EC" id="2.4.1.21" evidence="1"/>
<dbReference type="EMBL" id="CP000057">
    <property type="protein sequence ID" value="AAX88577.1"/>
    <property type="molecule type" value="Genomic_DNA"/>
</dbReference>
<dbReference type="RefSeq" id="WP_005656779.1">
    <property type="nucleotide sequence ID" value="NC_007146.2"/>
</dbReference>
<dbReference type="SMR" id="Q4QK70"/>
<dbReference type="CAZy" id="GT5">
    <property type="family name" value="Glycosyltransferase Family 5"/>
</dbReference>
<dbReference type="GeneID" id="93220518"/>
<dbReference type="KEGG" id="hit:NTHI1806"/>
<dbReference type="HOGENOM" id="CLU_009583_18_4_6"/>
<dbReference type="UniPathway" id="UPA00164"/>
<dbReference type="Proteomes" id="UP000002525">
    <property type="component" value="Chromosome"/>
</dbReference>
<dbReference type="GO" id="GO:0005829">
    <property type="term" value="C:cytosol"/>
    <property type="evidence" value="ECO:0007669"/>
    <property type="project" value="TreeGrafter"/>
</dbReference>
<dbReference type="GO" id="GO:0009011">
    <property type="term" value="F:alpha-1,4-glucan glucosyltransferase (ADP-glucose donor) activity"/>
    <property type="evidence" value="ECO:0007669"/>
    <property type="project" value="UniProtKB-UniRule"/>
</dbReference>
<dbReference type="GO" id="GO:0004373">
    <property type="term" value="F:alpha-1,4-glucan glucosyltransferase (UDP-glucose donor) activity"/>
    <property type="evidence" value="ECO:0007669"/>
    <property type="project" value="InterPro"/>
</dbReference>
<dbReference type="GO" id="GO:0005978">
    <property type="term" value="P:glycogen biosynthetic process"/>
    <property type="evidence" value="ECO:0007669"/>
    <property type="project" value="UniProtKB-UniRule"/>
</dbReference>
<dbReference type="CDD" id="cd03791">
    <property type="entry name" value="GT5_Glycogen_synthase_DULL1-like"/>
    <property type="match status" value="1"/>
</dbReference>
<dbReference type="FunFam" id="3.40.50.2000:FF:000011">
    <property type="entry name" value="Glycogen synthase"/>
    <property type="match status" value="1"/>
</dbReference>
<dbReference type="Gene3D" id="3.40.50.2000">
    <property type="entry name" value="Glycogen Phosphorylase B"/>
    <property type="match status" value="2"/>
</dbReference>
<dbReference type="HAMAP" id="MF_00484">
    <property type="entry name" value="Glycogen_synth"/>
    <property type="match status" value="1"/>
</dbReference>
<dbReference type="InterPro" id="IPR001296">
    <property type="entry name" value="Glyco_trans_1"/>
</dbReference>
<dbReference type="InterPro" id="IPR011835">
    <property type="entry name" value="GS/SS"/>
</dbReference>
<dbReference type="InterPro" id="IPR013534">
    <property type="entry name" value="Starch_synth_cat_dom"/>
</dbReference>
<dbReference type="NCBIfam" id="TIGR02095">
    <property type="entry name" value="glgA"/>
    <property type="match status" value="1"/>
</dbReference>
<dbReference type="NCBIfam" id="NF001899">
    <property type="entry name" value="PRK00654.1-2"/>
    <property type="match status" value="1"/>
</dbReference>
<dbReference type="PANTHER" id="PTHR45825:SF11">
    <property type="entry name" value="ALPHA AMYLASE DOMAIN-CONTAINING PROTEIN"/>
    <property type="match status" value="1"/>
</dbReference>
<dbReference type="PANTHER" id="PTHR45825">
    <property type="entry name" value="GRANULE-BOUND STARCH SYNTHASE 1, CHLOROPLASTIC/AMYLOPLASTIC"/>
    <property type="match status" value="1"/>
</dbReference>
<dbReference type="Pfam" id="PF08323">
    <property type="entry name" value="Glyco_transf_5"/>
    <property type="match status" value="1"/>
</dbReference>
<dbReference type="Pfam" id="PF00534">
    <property type="entry name" value="Glycos_transf_1"/>
    <property type="match status" value="1"/>
</dbReference>
<dbReference type="SUPFAM" id="SSF53756">
    <property type="entry name" value="UDP-Glycosyltransferase/glycogen phosphorylase"/>
    <property type="match status" value="1"/>
</dbReference>
<accession>Q4QK70</accession>
<keyword id="KW-0320">Glycogen biosynthesis</keyword>
<keyword id="KW-0328">Glycosyltransferase</keyword>
<keyword id="KW-0808">Transferase</keyword>
<comment type="function">
    <text evidence="1">Synthesizes alpha-1,4-glucan chains using ADP-glucose.</text>
</comment>
<comment type="catalytic activity">
    <reaction evidence="1">
        <text>[(1-&gt;4)-alpha-D-glucosyl](n) + ADP-alpha-D-glucose = [(1-&gt;4)-alpha-D-glucosyl](n+1) + ADP + H(+)</text>
        <dbReference type="Rhea" id="RHEA:18189"/>
        <dbReference type="Rhea" id="RHEA-COMP:9584"/>
        <dbReference type="Rhea" id="RHEA-COMP:9587"/>
        <dbReference type="ChEBI" id="CHEBI:15378"/>
        <dbReference type="ChEBI" id="CHEBI:15444"/>
        <dbReference type="ChEBI" id="CHEBI:57498"/>
        <dbReference type="ChEBI" id="CHEBI:456216"/>
        <dbReference type="EC" id="2.4.1.21"/>
    </reaction>
</comment>
<comment type="pathway">
    <text evidence="1">Glycan biosynthesis; glycogen biosynthesis.</text>
</comment>
<comment type="similarity">
    <text evidence="1">Belongs to the glycosyltransferase 1 family. Bacterial/plant glycogen synthase subfamily.</text>
</comment>
<reference key="1">
    <citation type="journal article" date="2005" name="J. Bacteriol.">
        <title>Genomic sequence of an otitis media isolate of nontypeable Haemophilus influenzae: comparative study with H. influenzae serotype d, strain KW20.</title>
        <authorList>
            <person name="Harrison A."/>
            <person name="Dyer D.W."/>
            <person name="Gillaspy A."/>
            <person name="Ray W.C."/>
            <person name="Mungur R."/>
            <person name="Carson M.B."/>
            <person name="Zhong H."/>
            <person name="Gipson J."/>
            <person name="Gipson M."/>
            <person name="Johnson L.S."/>
            <person name="Lewis L."/>
            <person name="Bakaletz L.O."/>
            <person name="Munson R.S. Jr."/>
        </authorList>
    </citation>
    <scope>NUCLEOTIDE SEQUENCE [LARGE SCALE GENOMIC DNA]</scope>
    <source>
        <strain>86-028NP</strain>
    </source>
</reference>
<gene>
    <name evidence="1" type="primary">glgA</name>
    <name type="ordered locus">NTHI1806</name>
</gene>
<sequence>MKILHVCSELYPLLKTGGLADVLGALPQAQNQIGLDARVLLPAYPAIIAGIQNTQVVAEFDNFAGHVVLRYGEYNGVGIYLIDAPHLYGREGNPYHDAYYNDYGDNYKRFALLGWVGAELATGLDSWWRAEVVHAHDWHAGLCAAYLFNKGRPAKSVFTIHNLAYQGQFSYHHLYEIGLPTGMFHVEGLELFGQISYLKSGLFYSDASTAVSPTYAEEITTPEFAYGLQGLLSGLKAQGRLVGILNGVDENIWHPNVDQYIPHHYKLKYMAGKKKNKAELQAYFNLPQDESALAFVMVTRLTEQKGVDLLIESADEIVKQGGQLMILGSGAPHFEQGIRELAERYPQNIAVKIGYDEALSHLMVAGGDVILVPSRFEPCGLTQLYGLQYGTLPLVRKTGGLADTVVDSTSESIKARTATGFVFESATPEALRHCLQRAFALWQKPRAWAMVRTDAMEQDFSWRKAAEQYRTLYERL</sequence>
<feature type="chain" id="PRO_0000230243" description="Glycogen synthase">
    <location>
        <begin position="1"/>
        <end position="476"/>
    </location>
</feature>
<feature type="binding site" evidence="1">
    <location>
        <position position="15"/>
    </location>
    <ligand>
        <name>ADP-alpha-D-glucose</name>
        <dbReference type="ChEBI" id="CHEBI:57498"/>
    </ligand>
</feature>
<name>GLGA_HAEI8</name>